<comment type="function">
    <text evidence="1">Allows the formation of correctly charged Asn-tRNA(Asn) or Gln-tRNA(Gln) through the transamidation of misacylated Asp-tRNA(Asn) or Glu-tRNA(Gln) in organisms which lack either or both of asparaginyl-tRNA or glutaminyl-tRNA synthetases. The reaction takes place in the presence of glutamine and ATP through an activated phospho-Asp-tRNA(Asn) or phospho-Glu-tRNA(Gln) (By similarity).</text>
</comment>
<comment type="catalytic activity">
    <reaction>
        <text>L-glutamyl-tRNA(Gln) + L-glutamine + ATP + H2O = L-glutaminyl-tRNA(Gln) + L-glutamate + ADP + phosphate + H(+)</text>
        <dbReference type="Rhea" id="RHEA:17521"/>
        <dbReference type="Rhea" id="RHEA-COMP:9681"/>
        <dbReference type="Rhea" id="RHEA-COMP:9684"/>
        <dbReference type="ChEBI" id="CHEBI:15377"/>
        <dbReference type="ChEBI" id="CHEBI:15378"/>
        <dbReference type="ChEBI" id="CHEBI:29985"/>
        <dbReference type="ChEBI" id="CHEBI:30616"/>
        <dbReference type="ChEBI" id="CHEBI:43474"/>
        <dbReference type="ChEBI" id="CHEBI:58359"/>
        <dbReference type="ChEBI" id="CHEBI:78520"/>
        <dbReference type="ChEBI" id="CHEBI:78521"/>
        <dbReference type="ChEBI" id="CHEBI:456216"/>
    </reaction>
</comment>
<comment type="catalytic activity">
    <reaction>
        <text>L-aspartyl-tRNA(Asn) + L-glutamine + ATP + H2O = L-asparaginyl-tRNA(Asn) + L-glutamate + ADP + phosphate + 2 H(+)</text>
        <dbReference type="Rhea" id="RHEA:14513"/>
        <dbReference type="Rhea" id="RHEA-COMP:9674"/>
        <dbReference type="Rhea" id="RHEA-COMP:9677"/>
        <dbReference type="ChEBI" id="CHEBI:15377"/>
        <dbReference type="ChEBI" id="CHEBI:15378"/>
        <dbReference type="ChEBI" id="CHEBI:29985"/>
        <dbReference type="ChEBI" id="CHEBI:30616"/>
        <dbReference type="ChEBI" id="CHEBI:43474"/>
        <dbReference type="ChEBI" id="CHEBI:58359"/>
        <dbReference type="ChEBI" id="CHEBI:78515"/>
        <dbReference type="ChEBI" id="CHEBI:78516"/>
        <dbReference type="ChEBI" id="CHEBI:456216"/>
    </reaction>
</comment>
<comment type="subunit">
    <text evidence="1">Heterotrimer of A, B and C subunits.</text>
</comment>
<comment type="similarity">
    <text evidence="2">Belongs to the GatC family.</text>
</comment>
<accession>P68810</accession>
<accession>Q9RF08</accession>
<feature type="chain" id="PRO_0000105335" description="Aspartyl/glutamyl-tRNA(Asn/Gln) amidotransferase subunit C">
    <location>
        <begin position="1"/>
        <end position="100"/>
    </location>
</feature>
<organism>
    <name type="scientific">Staphylococcus aureus (strain MW2)</name>
    <dbReference type="NCBI Taxonomy" id="196620"/>
    <lineage>
        <taxon>Bacteria</taxon>
        <taxon>Bacillati</taxon>
        <taxon>Bacillota</taxon>
        <taxon>Bacilli</taxon>
        <taxon>Bacillales</taxon>
        <taxon>Staphylococcaceae</taxon>
        <taxon>Staphylococcus</taxon>
    </lineage>
</organism>
<proteinExistence type="inferred from homology"/>
<keyword id="KW-0067">ATP-binding</keyword>
<keyword id="KW-0436">Ligase</keyword>
<keyword id="KW-0547">Nucleotide-binding</keyword>
<keyword id="KW-0648">Protein biosynthesis</keyword>
<evidence type="ECO:0000250" key="1"/>
<evidence type="ECO:0000305" key="2"/>
<sequence>MTKVTREEVEHIANLARLQISPEETEEMANTLESILDFAKQNDSADTEGVEPTYHVLDLQNVLREDKAIKGIPQELALKNAKETEDGQFKVPTIMNEEDA</sequence>
<name>GATC_STAAW</name>
<reference key="1">
    <citation type="journal article" date="2002" name="Lancet">
        <title>Genome and virulence determinants of high virulence community-acquired MRSA.</title>
        <authorList>
            <person name="Baba T."/>
            <person name="Takeuchi F."/>
            <person name="Kuroda M."/>
            <person name="Yuzawa H."/>
            <person name="Aoki K."/>
            <person name="Oguchi A."/>
            <person name="Nagai Y."/>
            <person name="Iwama N."/>
            <person name="Asano K."/>
            <person name="Naimi T."/>
            <person name="Kuroda H."/>
            <person name="Cui L."/>
            <person name="Yamamoto K."/>
            <person name="Hiramatsu K."/>
        </authorList>
    </citation>
    <scope>NUCLEOTIDE SEQUENCE [LARGE SCALE GENOMIC DNA]</scope>
    <source>
        <strain>MW2</strain>
    </source>
</reference>
<gene>
    <name type="primary">gatC</name>
    <name type="ordered locus">MW1842</name>
</gene>
<dbReference type="EC" id="6.3.5.-"/>
<dbReference type="EMBL" id="BA000033">
    <property type="protein sequence ID" value="BAB95707.1"/>
    <property type="molecule type" value="Genomic_DNA"/>
</dbReference>
<dbReference type="RefSeq" id="WP_000170162.1">
    <property type="nucleotide sequence ID" value="NC_003923.1"/>
</dbReference>
<dbReference type="SMR" id="P68810"/>
<dbReference type="GeneID" id="98346286"/>
<dbReference type="KEGG" id="sam:MW1842"/>
<dbReference type="HOGENOM" id="CLU_105899_1_2_9"/>
<dbReference type="GO" id="GO:0050566">
    <property type="term" value="F:asparaginyl-tRNA synthase (glutamine-hydrolyzing) activity"/>
    <property type="evidence" value="ECO:0007669"/>
    <property type="project" value="RHEA"/>
</dbReference>
<dbReference type="GO" id="GO:0005524">
    <property type="term" value="F:ATP binding"/>
    <property type="evidence" value="ECO:0007669"/>
    <property type="project" value="UniProtKB-KW"/>
</dbReference>
<dbReference type="GO" id="GO:0050567">
    <property type="term" value="F:glutaminyl-tRNA synthase (glutamine-hydrolyzing) activity"/>
    <property type="evidence" value="ECO:0007669"/>
    <property type="project" value="UniProtKB-UniRule"/>
</dbReference>
<dbReference type="GO" id="GO:0070681">
    <property type="term" value="P:glutaminyl-tRNAGln biosynthesis via transamidation"/>
    <property type="evidence" value="ECO:0007669"/>
    <property type="project" value="TreeGrafter"/>
</dbReference>
<dbReference type="GO" id="GO:0006450">
    <property type="term" value="P:regulation of translational fidelity"/>
    <property type="evidence" value="ECO:0007669"/>
    <property type="project" value="InterPro"/>
</dbReference>
<dbReference type="GO" id="GO:0006412">
    <property type="term" value="P:translation"/>
    <property type="evidence" value="ECO:0007669"/>
    <property type="project" value="UniProtKB-UniRule"/>
</dbReference>
<dbReference type="Gene3D" id="1.10.20.60">
    <property type="entry name" value="Glu-tRNAGln amidotransferase C subunit, N-terminal domain"/>
    <property type="match status" value="1"/>
</dbReference>
<dbReference type="HAMAP" id="MF_00122">
    <property type="entry name" value="GatC"/>
    <property type="match status" value="1"/>
</dbReference>
<dbReference type="InterPro" id="IPR036113">
    <property type="entry name" value="Asp/Glu-ADT_sf_sub_c"/>
</dbReference>
<dbReference type="InterPro" id="IPR003837">
    <property type="entry name" value="GatC"/>
</dbReference>
<dbReference type="NCBIfam" id="TIGR00135">
    <property type="entry name" value="gatC"/>
    <property type="match status" value="1"/>
</dbReference>
<dbReference type="PANTHER" id="PTHR15004">
    <property type="entry name" value="GLUTAMYL-TRNA(GLN) AMIDOTRANSFERASE SUBUNIT C, MITOCHONDRIAL"/>
    <property type="match status" value="1"/>
</dbReference>
<dbReference type="PANTHER" id="PTHR15004:SF0">
    <property type="entry name" value="GLUTAMYL-TRNA(GLN) AMIDOTRANSFERASE SUBUNIT C, MITOCHONDRIAL"/>
    <property type="match status" value="1"/>
</dbReference>
<dbReference type="Pfam" id="PF02686">
    <property type="entry name" value="GatC"/>
    <property type="match status" value="1"/>
</dbReference>
<dbReference type="SUPFAM" id="SSF141000">
    <property type="entry name" value="Glu-tRNAGln amidotransferase C subunit"/>
    <property type="match status" value="1"/>
</dbReference>
<protein>
    <recommendedName>
        <fullName>Aspartyl/glutamyl-tRNA(Asn/Gln) amidotransferase subunit C</fullName>
        <shortName>Asp/Glu-ADT subunit C</shortName>
        <ecNumber>6.3.5.-</ecNumber>
    </recommendedName>
</protein>